<organism>
    <name type="scientific">Pagothenia borchgrevinki</name>
    <name type="common">Bald rockcod</name>
    <name type="synonym">Trematomus borchgrevinki</name>
    <dbReference type="NCBI Taxonomy" id="8213"/>
    <lineage>
        <taxon>Eukaryota</taxon>
        <taxon>Metazoa</taxon>
        <taxon>Chordata</taxon>
        <taxon>Craniata</taxon>
        <taxon>Vertebrata</taxon>
        <taxon>Euteleostomi</taxon>
        <taxon>Actinopterygii</taxon>
        <taxon>Neopterygii</taxon>
        <taxon>Teleostei</taxon>
        <taxon>Neoteleostei</taxon>
        <taxon>Acanthomorphata</taxon>
        <taxon>Eupercaria</taxon>
        <taxon>Perciformes</taxon>
        <taxon>Notothenioidei</taxon>
        <taxon>Nototheniidae</taxon>
        <taxon>Pagothenia</taxon>
    </lineage>
</organism>
<proteinExistence type="evidence at protein level"/>
<comment type="function">
    <text>Involved in oxygen transport from gills to the various peripheral tissues.</text>
</comment>
<comment type="subunit">
    <text>Heterotetramer of two alpha chains and two beta chains.</text>
</comment>
<comment type="tissue specificity">
    <text>Red blood cells.</text>
</comment>
<comment type="miscellaneous">
    <text>This fish has five hemoglobins: Hb C, Hb O, Hb 1, Hb 2 and Hb 3. Hb 0 presents the strongest Bohr effect while Hb 1 presents the weakest Bohr effect.</text>
</comment>
<comment type="similarity">
    <text evidence="1">Belongs to the globin family.</text>
</comment>
<sequence length="142" mass="15591">SLSEKNKAAVKALWSKIGKSSDAIGNDALSRMIVVYPQTKTYFSHWPEVTPGSPHIKAHGKKVMGGIALAVTKIDDLKTGLSELSEQHAYKLRVDPANFKTLNHCILVVISTMFPKEFTPEAHVSLDKFLSGVALALADRYR</sequence>
<evidence type="ECO:0000255" key="1">
    <source>
        <dbReference type="PROSITE-ProRule" id="PRU00238"/>
    </source>
</evidence>
<evidence type="ECO:0000269" key="2">
    <source ref="1"/>
</evidence>
<dbReference type="SMR" id="P82990"/>
<dbReference type="GO" id="GO:0072562">
    <property type="term" value="C:blood microparticle"/>
    <property type="evidence" value="ECO:0007669"/>
    <property type="project" value="TreeGrafter"/>
</dbReference>
<dbReference type="GO" id="GO:0031838">
    <property type="term" value="C:haptoglobin-hemoglobin complex"/>
    <property type="evidence" value="ECO:0007669"/>
    <property type="project" value="TreeGrafter"/>
</dbReference>
<dbReference type="GO" id="GO:0005833">
    <property type="term" value="C:hemoglobin complex"/>
    <property type="evidence" value="ECO:0007669"/>
    <property type="project" value="InterPro"/>
</dbReference>
<dbReference type="GO" id="GO:0031720">
    <property type="term" value="F:haptoglobin binding"/>
    <property type="evidence" value="ECO:0007669"/>
    <property type="project" value="TreeGrafter"/>
</dbReference>
<dbReference type="GO" id="GO:0020037">
    <property type="term" value="F:heme binding"/>
    <property type="evidence" value="ECO:0007669"/>
    <property type="project" value="InterPro"/>
</dbReference>
<dbReference type="GO" id="GO:0005506">
    <property type="term" value="F:iron ion binding"/>
    <property type="evidence" value="ECO:0007669"/>
    <property type="project" value="InterPro"/>
</dbReference>
<dbReference type="GO" id="GO:0043177">
    <property type="term" value="F:organic acid binding"/>
    <property type="evidence" value="ECO:0007669"/>
    <property type="project" value="TreeGrafter"/>
</dbReference>
<dbReference type="GO" id="GO:0019825">
    <property type="term" value="F:oxygen binding"/>
    <property type="evidence" value="ECO:0007669"/>
    <property type="project" value="InterPro"/>
</dbReference>
<dbReference type="GO" id="GO:0005344">
    <property type="term" value="F:oxygen carrier activity"/>
    <property type="evidence" value="ECO:0007669"/>
    <property type="project" value="UniProtKB-KW"/>
</dbReference>
<dbReference type="GO" id="GO:0004601">
    <property type="term" value="F:peroxidase activity"/>
    <property type="evidence" value="ECO:0007669"/>
    <property type="project" value="TreeGrafter"/>
</dbReference>
<dbReference type="GO" id="GO:0042744">
    <property type="term" value="P:hydrogen peroxide catabolic process"/>
    <property type="evidence" value="ECO:0007669"/>
    <property type="project" value="TreeGrafter"/>
</dbReference>
<dbReference type="CDD" id="cd08927">
    <property type="entry name" value="Hb-alpha-like"/>
    <property type="match status" value="1"/>
</dbReference>
<dbReference type="FunFam" id="1.10.490.10:FF:000002">
    <property type="entry name" value="Hemoglobin subunit alpha"/>
    <property type="match status" value="1"/>
</dbReference>
<dbReference type="Gene3D" id="1.10.490.10">
    <property type="entry name" value="Globins"/>
    <property type="match status" value="1"/>
</dbReference>
<dbReference type="InterPro" id="IPR000971">
    <property type="entry name" value="Globin"/>
</dbReference>
<dbReference type="InterPro" id="IPR009050">
    <property type="entry name" value="Globin-like_sf"/>
</dbReference>
<dbReference type="InterPro" id="IPR012292">
    <property type="entry name" value="Globin/Proto"/>
</dbReference>
<dbReference type="InterPro" id="IPR002338">
    <property type="entry name" value="Hemoglobin_a-typ"/>
</dbReference>
<dbReference type="InterPro" id="IPR050056">
    <property type="entry name" value="Hemoglobin_oxygen_transport"/>
</dbReference>
<dbReference type="InterPro" id="IPR002339">
    <property type="entry name" value="Hemoglobin_pi"/>
</dbReference>
<dbReference type="PANTHER" id="PTHR11442">
    <property type="entry name" value="HEMOGLOBIN FAMILY MEMBER"/>
    <property type="match status" value="1"/>
</dbReference>
<dbReference type="PANTHER" id="PTHR11442:SF41">
    <property type="entry name" value="HEMOGLOBIN SUBUNIT ZETA"/>
    <property type="match status" value="1"/>
</dbReference>
<dbReference type="Pfam" id="PF00042">
    <property type="entry name" value="Globin"/>
    <property type="match status" value="1"/>
</dbReference>
<dbReference type="PRINTS" id="PR00612">
    <property type="entry name" value="ALPHAHAEM"/>
</dbReference>
<dbReference type="PRINTS" id="PR00815">
    <property type="entry name" value="PIHAEM"/>
</dbReference>
<dbReference type="SUPFAM" id="SSF46458">
    <property type="entry name" value="Globin-like"/>
    <property type="match status" value="1"/>
</dbReference>
<dbReference type="PROSITE" id="PS01033">
    <property type="entry name" value="GLOBIN"/>
    <property type="match status" value="1"/>
</dbReference>
<feature type="chain" id="PRO_0000052713" description="Hemoglobin subunit alpha">
    <location>
        <begin position="1"/>
        <end position="142"/>
    </location>
</feature>
<feature type="domain" description="Globin" evidence="1">
    <location>
        <begin position="1"/>
        <end position="142"/>
    </location>
</feature>
<feature type="binding site" evidence="1">
    <location>
        <position position="59"/>
    </location>
    <ligand>
        <name>O2</name>
        <dbReference type="ChEBI" id="CHEBI:15379"/>
    </ligand>
</feature>
<feature type="binding site" description="proximal binding residue" evidence="1">
    <location>
        <position position="88"/>
    </location>
    <ligand>
        <name>heme b</name>
        <dbReference type="ChEBI" id="CHEBI:60344"/>
    </ligand>
    <ligandPart>
        <name>Fe</name>
        <dbReference type="ChEBI" id="CHEBI:18248"/>
    </ligandPart>
</feature>
<feature type="modified residue" description="N-acetylserine" evidence="2">
    <location>
        <position position="1"/>
    </location>
</feature>
<gene>
    <name type="primary">hba</name>
</gene>
<keyword id="KW-0007">Acetylation</keyword>
<keyword id="KW-0903">Direct protein sequencing</keyword>
<keyword id="KW-0349">Heme</keyword>
<keyword id="KW-0408">Iron</keyword>
<keyword id="KW-0479">Metal-binding</keyword>
<keyword id="KW-0561">Oxygen transport</keyword>
<keyword id="KW-0813">Transport</keyword>
<name>HBA_PAGBO</name>
<accession>P82990</accession>
<accession>P82344</accession>
<accession>P82991</accession>
<reference key="1">
    <citation type="journal article" date="2000" name="J. Fish Biol.">
        <title>Functionally distinct haemoglobins of the cryopelagic antarctic teleost Pagothenia borchgrevinki.</title>
        <authorList>
            <person name="Riccio A."/>
            <person name="Tamburrini M."/>
            <person name="Carratore V."/>
            <person name="di Prisco G."/>
        </authorList>
    </citation>
    <scope>PROTEIN SEQUENCE</scope>
    <scope>ACETYLATION AT SER-1</scope>
    <source>
        <tissue>Blood</tissue>
    </source>
</reference>
<protein>
    <recommendedName>
        <fullName>Hemoglobin subunit alpha</fullName>
    </recommendedName>
    <alternativeName>
        <fullName>Alpha-globin</fullName>
    </alternativeName>
    <alternativeName>
        <fullName>Hemoglobin alpha chain</fullName>
    </alternativeName>
</protein>